<protein>
    <recommendedName>
        <fullName evidence="1">Large ribosomal subunit protein uL3</fullName>
    </recommendedName>
    <alternativeName>
        <fullName evidence="3">50S ribosomal protein L3</fullName>
    </alternativeName>
</protein>
<organism>
    <name type="scientific">Lacticaseibacillus paracasei (strain ATCC 334 / BCRC 17002 / CCUG 31169 / CIP 107868 / KCTC 3260 / NRRL B-441)</name>
    <name type="common">Lactobacillus paracasei</name>
    <dbReference type="NCBI Taxonomy" id="321967"/>
    <lineage>
        <taxon>Bacteria</taxon>
        <taxon>Bacillati</taxon>
        <taxon>Bacillota</taxon>
        <taxon>Bacilli</taxon>
        <taxon>Lactobacillales</taxon>
        <taxon>Lactobacillaceae</taxon>
        <taxon>Lacticaseibacillus</taxon>
    </lineage>
</organism>
<comment type="function">
    <text evidence="1">One of the primary rRNA binding proteins, it binds directly near the 3'-end of the 23S rRNA, where it nucleates assembly of the 50S subunit.</text>
</comment>
<comment type="subunit">
    <text evidence="1">Part of the 50S ribosomal subunit. Forms a cluster with proteins L14 and L19.</text>
</comment>
<comment type="similarity">
    <text evidence="1">Belongs to the universal ribosomal protein uL3 family.</text>
</comment>
<keyword id="KW-1185">Reference proteome</keyword>
<keyword id="KW-0687">Ribonucleoprotein</keyword>
<keyword id="KW-0689">Ribosomal protein</keyword>
<keyword id="KW-0694">RNA-binding</keyword>
<keyword id="KW-0699">rRNA-binding</keyword>
<name>RL3_LACP3</name>
<accession>Q034Y3</accession>
<reference key="1">
    <citation type="journal article" date="2006" name="Proc. Natl. Acad. Sci. U.S.A.">
        <title>Comparative genomics of the lactic acid bacteria.</title>
        <authorList>
            <person name="Makarova K.S."/>
            <person name="Slesarev A."/>
            <person name="Wolf Y.I."/>
            <person name="Sorokin A."/>
            <person name="Mirkin B."/>
            <person name="Koonin E.V."/>
            <person name="Pavlov A."/>
            <person name="Pavlova N."/>
            <person name="Karamychev V."/>
            <person name="Polouchine N."/>
            <person name="Shakhova V."/>
            <person name="Grigoriev I."/>
            <person name="Lou Y."/>
            <person name="Rohksar D."/>
            <person name="Lucas S."/>
            <person name="Huang K."/>
            <person name="Goodstein D.M."/>
            <person name="Hawkins T."/>
            <person name="Plengvidhya V."/>
            <person name="Welker D."/>
            <person name="Hughes J."/>
            <person name="Goh Y."/>
            <person name="Benson A."/>
            <person name="Baldwin K."/>
            <person name="Lee J.-H."/>
            <person name="Diaz-Muniz I."/>
            <person name="Dosti B."/>
            <person name="Smeianov V."/>
            <person name="Wechter W."/>
            <person name="Barabote R."/>
            <person name="Lorca G."/>
            <person name="Altermann E."/>
            <person name="Barrangou R."/>
            <person name="Ganesan B."/>
            <person name="Xie Y."/>
            <person name="Rawsthorne H."/>
            <person name="Tamir D."/>
            <person name="Parker C."/>
            <person name="Breidt F."/>
            <person name="Broadbent J.R."/>
            <person name="Hutkins R."/>
            <person name="O'Sullivan D."/>
            <person name="Steele J."/>
            <person name="Unlu G."/>
            <person name="Saier M.H. Jr."/>
            <person name="Klaenhammer T."/>
            <person name="Richardson P."/>
            <person name="Kozyavkin S."/>
            <person name="Weimer B.C."/>
            <person name="Mills D.A."/>
        </authorList>
    </citation>
    <scope>NUCLEOTIDE SEQUENCE [LARGE SCALE GENOMIC DNA]</scope>
    <source>
        <strain>ATCC 334 / BCRC 17002 / CCUG 31169 / CIP 107868 / KCTC 3260 / NRRL B-441</strain>
    </source>
</reference>
<evidence type="ECO:0000255" key="1">
    <source>
        <dbReference type="HAMAP-Rule" id="MF_01325"/>
    </source>
</evidence>
<evidence type="ECO:0000256" key="2">
    <source>
        <dbReference type="SAM" id="MobiDB-lite"/>
    </source>
</evidence>
<evidence type="ECO:0000305" key="3"/>
<proteinExistence type="inferred from homology"/>
<feature type="chain" id="PRO_1000052063" description="Large ribosomal subunit protein uL3">
    <location>
        <begin position="1"/>
        <end position="210"/>
    </location>
</feature>
<feature type="region of interest" description="Disordered" evidence="2">
    <location>
        <begin position="119"/>
        <end position="143"/>
    </location>
</feature>
<gene>
    <name evidence="1" type="primary">rplC</name>
    <name type="ordered locus">LSEI_2503</name>
</gene>
<dbReference type="EMBL" id="CP000423">
    <property type="protein sequence ID" value="ABJ71239.1"/>
    <property type="molecule type" value="Genomic_DNA"/>
</dbReference>
<dbReference type="RefSeq" id="WP_003567566.1">
    <property type="nucleotide sequence ID" value="NC_008526.1"/>
</dbReference>
<dbReference type="RefSeq" id="YP_807681.1">
    <property type="nucleotide sequence ID" value="NC_008526.1"/>
</dbReference>
<dbReference type="SMR" id="Q034Y3"/>
<dbReference type="STRING" id="321967.LSEI_2503"/>
<dbReference type="PaxDb" id="321967-LSEI_2503"/>
<dbReference type="GeneID" id="57091082"/>
<dbReference type="KEGG" id="lca:LSEI_2503"/>
<dbReference type="PATRIC" id="fig|321967.11.peg.2457"/>
<dbReference type="HOGENOM" id="CLU_044142_4_1_9"/>
<dbReference type="Proteomes" id="UP000001651">
    <property type="component" value="Chromosome"/>
</dbReference>
<dbReference type="GO" id="GO:0022625">
    <property type="term" value="C:cytosolic large ribosomal subunit"/>
    <property type="evidence" value="ECO:0007669"/>
    <property type="project" value="TreeGrafter"/>
</dbReference>
<dbReference type="GO" id="GO:0019843">
    <property type="term" value="F:rRNA binding"/>
    <property type="evidence" value="ECO:0007669"/>
    <property type="project" value="UniProtKB-UniRule"/>
</dbReference>
<dbReference type="GO" id="GO:0003735">
    <property type="term" value="F:structural constituent of ribosome"/>
    <property type="evidence" value="ECO:0007669"/>
    <property type="project" value="InterPro"/>
</dbReference>
<dbReference type="GO" id="GO:0006412">
    <property type="term" value="P:translation"/>
    <property type="evidence" value="ECO:0007669"/>
    <property type="project" value="UniProtKB-UniRule"/>
</dbReference>
<dbReference type="FunFam" id="2.40.30.10:FF:000004">
    <property type="entry name" value="50S ribosomal protein L3"/>
    <property type="match status" value="1"/>
</dbReference>
<dbReference type="FunFam" id="3.30.160.810:FF:000002">
    <property type="entry name" value="50S ribosomal protein L3"/>
    <property type="match status" value="1"/>
</dbReference>
<dbReference type="Gene3D" id="3.30.160.810">
    <property type="match status" value="1"/>
</dbReference>
<dbReference type="Gene3D" id="2.40.30.10">
    <property type="entry name" value="Translation factors"/>
    <property type="match status" value="1"/>
</dbReference>
<dbReference type="HAMAP" id="MF_01325_B">
    <property type="entry name" value="Ribosomal_uL3_B"/>
    <property type="match status" value="1"/>
</dbReference>
<dbReference type="InterPro" id="IPR000597">
    <property type="entry name" value="Ribosomal_uL3"/>
</dbReference>
<dbReference type="InterPro" id="IPR019927">
    <property type="entry name" value="Ribosomal_uL3_bac/org-type"/>
</dbReference>
<dbReference type="InterPro" id="IPR009000">
    <property type="entry name" value="Transl_B-barrel_sf"/>
</dbReference>
<dbReference type="NCBIfam" id="TIGR03625">
    <property type="entry name" value="L3_bact"/>
    <property type="match status" value="1"/>
</dbReference>
<dbReference type="PANTHER" id="PTHR11229">
    <property type="entry name" value="50S RIBOSOMAL PROTEIN L3"/>
    <property type="match status" value="1"/>
</dbReference>
<dbReference type="PANTHER" id="PTHR11229:SF16">
    <property type="entry name" value="LARGE RIBOSOMAL SUBUNIT PROTEIN UL3C"/>
    <property type="match status" value="1"/>
</dbReference>
<dbReference type="Pfam" id="PF00297">
    <property type="entry name" value="Ribosomal_L3"/>
    <property type="match status" value="1"/>
</dbReference>
<dbReference type="SUPFAM" id="SSF50447">
    <property type="entry name" value="Translation proteins"/>
    <property type="match status" value="1"/>
</dbReference>
<sequence>MARKGILGKKVGMTQVFTDNGELVPVTVVDVTPNVVMQVKTVESDGYEAVQLGYGDMREVLTNKPSVGHAKKADTTPKRFVREIRDVALSDYEIGSEVKADEFAAGDIVDVTGTSKGHGYQGNIKKDGQSRGPMAHGSRYHRRPGSLGAIINKVFKGKKLPGRMGNHTRTMQNLQVVAADTEHNVLLIKGNVPGANKSFVTIRSAVKAAK</sequence>